<evidence type="ECO:0000255" key="1">
    <source>
        <dbReference type="HAMAP-Rule" id="MF_00015"/>
    </source>
</evidence>
<keyword id="KW-0068">Autocatalytic cleavage</keyword>
<keyword id="KW-0227">DNA damage</keyword>
<keyword id="KW-0234">DNA repair</keyword>
<keyword id="KW-0235">DNA replication</keyword>
<keyword id="KW-0238">DNA-binding</keyword>
<keyword id="KW-0378">Hydrolase</keyword>
<keyword id="KW-0678">Repressor</keyword>
<keyword id="KW-0742">SOS response</keyword>
<keyword id="KW-0804">Transcription</keyword>
<keyword id="KW-0805">Transcription regulation</keyword>
<accession>B1YPM6</accession>
<name>LEXA_BURA4</name>
<dbReference type="EC" id="3.4.21.88" evidence="1"/>
<dbReference type="EMBL" id="CP001025">
    <property type="protein sequence ID" value="ACB64003.1"/>
    <property type="molecule type" value="Genomic_DNA"/>
</dbReference>
<dbReference type="RefSeq" id="WP_006754655.1">
    <property type="nucleotide sequence ID" value="NC_010551.1"/>
</dbReference>
<dbReference type="SMR" id="B1YPM6"/>
<dbReference type="MEROPS" id="S24.001"/>
<dbReference type="GeneID" id="62011030"/>
<dbReference type="KEGG" id="bac:BamMC406_1516"/>
<dbReference type="HOGENOM" id="CLU_066192_45_3_4"/>
<dbReference type="OrthoDB" id="9802364at2"/>
<dbReference type="Proteomes" id="UP000001680">
    <property type="component" value="Chromosome 1"/>
</dbReference>
<dbReference type="GO" id="GO:0003677">
    <property type="term" value="F:DNA binding"/>
    <property type="evidence" value="ECO:0007669"/>
    <property type="project" value="UniProtKB-UniRule"/>
</dbReference>
<dbReference type="GO" id="GO:0004252">
    <property type="term" value="F:serine-type endopeptidase activity"/>
    <property type="evidence" value="ECO:0007669"/>
    <property type="project" value="UniProtKB-UniRule"/>
</dbReference>
<dbReference type="GO" id="GO:0006281">
    <property type="term" value="P:DNA repair"/>
    <property type="evidence" value="ECO:0007669"/>
    <property type="project" value="UniProtKB-UniRule"/>
</dbReference>
<dbReference type="GO" id="GO:0006260">
    <property type="term" value="P:DNA replication"/>
    <property type="evidence" value="ECO:0007669"/>
    <property type="project" value="UniProtKB-UniRule"/>
</dbReference>
<dbReference type="GO" id="GO:0045892">
    <property type="term" value="P:negative regulation of DNA-templated transcription"/>
    <property type="evidence" value="ECO:0007669"/>
    <property type="project" value="UniProtKB-UniRule"/>
</dbReference>
<dbReference type="GO" id="GO:0006508">
    <property type="term" value="P:proteolysis"/>
    <property type="evidence" value="ECO:0007669"/>
    <property type="project" value="InterPro"/>
</dbReference>
<dbReference type="GO" id="GO:0009432">
    <property type="term" value="P:SOS response"/>
    <property type="evidence" value="ECO:0007669"/>
    <property type="project" value="UniProtKB-UniRule"/>
</dbReference>
<dbReference type="CDD" id="cd06529">
    <property type="entry name" value="S24_LexA-like"/>
    <property type="match status" value="1"/>
</dbReference>
<dbReference type="FunFam" id="1.10.10.10:FF:000009">
    <property type="entry name" value="LexA repressor"/>
    <property type="match status" value="1"/>
</dbReference>
<dbReference type="FunFam" id="2.10.109.10:FF:000001">
    <property type="entry name" value="LexA repressor"/>
    <property type="match status" value="1"/>
</dbReference>
<dbReference type="Gene3D" id="2.10.109.10">
    <property type="entry name" value="Umud Fragment, subunit A"/>
    <property type="match status" value="1"/>
</dbReference>
<dbReference type="Gene3D" id="1.10.10.10">
    <property type="entry name" value="Winged helix-like DNA-binding domain superfamily/Winged helix DNA-binding domain"/>
    <property type="match status" value="1"/>
</dbReference>
<dbReference type="HAMAP" id="MF_00015">
    <property type="entry name" value="LexA"/>
    <property type="match status" value="1"/>
</dbReference>
<dbReference type="InterPro" id="IPR006200">
    <property type="entry name" value="LexA"/>
</dbReference>
<dbReference type="InterPro" id="IPR039418">
    <property type="entry name" value="LexA-like"/>
</dbReference>
<dbReference type="InterPro" id="IPR036286">
    <property type="entry name" value="LexA/Signal_pep-like_sf"/>
</dbReference>
<dbReference type="InterPro" id="IPR006199">
    <property type="entry name" value="LexA_DNA-bd_dom"/>
</dbReference>
<dbReference type="InterPro" id="IPR050077">
    <property type="entry name" value="LexA_repressor"/>
</dbReference>
<dbReference type="InterPro" id="IPR006197">
    <property type="entry name" value="Peptidase_S24_LexA"/>
</dbReference>
<dbReference type="InterPro" id="IPR015927">
    <property type="entry name" value="Peptidase_S24_S26A/B/C"/>
</dbReference>
<dbReference type="InterPro" id="IPR036388">
    <property type="entry name" value="WH-like_DNA-bd_sf"/>
</dbReference>
<dbReference type="InterPro" id="IPR036390">
    <property type="entry name" value="WH_DNA-bd_sf"/>
</dbReference>
<dbReference type="NCBIfam" id="TIGR00498">
    <property type="entry name" value="lexA"/>
    <property type="match status" value="1"/>
</dbReference>
<dbReference type="PANTHER" id="PTHR33516">
    <property type="entry name" value="LEXA REPRESSOR"/>
    <property type="match status" value="1"/>
</dbReference>
<dbReference type="PANTHER" id="PTHR33516:SF2">
    <property type="entry name" value="LEXA REPRESSOR-RELATED"/>
    <property type="match status" value="1"/>
</dbReference>
<dbReference type="Pfam" id="PF01726">
    <property type="entry name" value="LexA_DNA_bind"/>
    <property type="match status" value="1"/>
</dbReference>
<dbReference type="Pfam" id="PF00717">
    <property type="entry name" value="Peptidase_S24"/>
    <property type="match status" value="1"/>
</dbReference>
<dbReference type="PRINTS" id="PR00726">
    <property type="entry name" value="LEXASERPTASE"/>
</dbReference>
<dbReference type="SUPFAM" id="SSF51306">
    <property type="entry name" value="LexA/Signal peptidase"/>
    <property type="match status" value="1"/>
</dbReference>
<dbReference type="SUPFAM" id="SSF46785">
    <property type="entry name" value="Winged helix' DNA-binding domain"/>
    <property type="match status" value="1"/>
</dbReference>
<comment type="function">
    <text evidence="1">Represses a number of genes involved in the response to DNA damage (SOS response), including recA and lexA. In the presence of single-stranded DNA, RecA interacts with LexA causing an autocatalytic cleavage which disrupts the DNA-binding part of LexA, leading to derepression of the SOS regulon and eventually DNA repair.</text>
</comment>
<comment type="catalytic activity">
    <reaction evidence="1">
        <text>Hydrolysis of Ala-|-Gly bond in repressor LexA.</text>
        <dbReference type="EC" id="3.4.21.88"/>
    </reaction>
</comment>
<comment type="subunit">
    <text evidence="1">Homodimer.</text>
</comment>
<comment type="similarity">
    <text evidence="1">Belongs to the peptidase S24 family.</text>
</comment>
<sequence>MTKLTARQQQVFDLIRRAIERSGFPPTRAEIAAELGFSSPNAAEEHLRALARKGVIELAAGASRGIRLLGIDDAPHQFTLPHAGLMQLSLPLVGRVAAGSPILAQEHISQHYACDPALFTSKPDYLLKVRGLSMRDAGILDGDLLAVQKRTEAKDGQIIVARLGDDVTVKRLMRRPGGLELIAENPDYENIFVKAGSAEFALEGIAVGLIRSGEL</sequence>
<reference key="1">
    <citation type="submission" date="2008-04" db="EMBL/GenBank/DDBJ databases">
        <title>Complete sequence of chromosome 1 of Burkholderia ambifaria MC40-6.</title>
        <authorList>
            <person name="Copeland A."/>
            <person name="Lucas S."/>
            <person name="Lapidus A."/>
            <person name="Glavina del Rio T."/>
            <person name="Dalin E."/>
            <person name="Tice H."/>
            <person name="Pitluck S."/>
            <person name="Chain P."/>
            <person name="Malfatti S."/>
            <person name="Shin M."/>
            <person name="Vergez L."/>
            <person name="Lang D."/>
            <person name="Schmutz J."/>
            <person name="Larimer F."/>
            <person name="Land M."/>
            <person name="Hauser L."/>
            <person name="Kyrpides N."/>
            <person name="Lykidis A."/>
            <person name="Ramette A."/>
            <person name="Konstantinidis K."/>
            <person name="Tiedje J."/>
            <person name="Richardson P."/>
        </authorList>
    </citation>
    <scope>NUCLEOTIDE SEQUENCE [LARGE SCALE GENOMIC DNA]</scope>
    <source>
        <strain>MC40-6</strain>
    </source>
</reference>
<gene>
    <name evidence="1" type="primary">lexA</name>
    <name type="ordered locus">BamMC406_1516</name>
</gene>
<proteinExistence type="inferred from homology"/>
<feature type="chain" id="PRO_1000089550" description="LexA repressor">
    <location>
        <begin position="1"/>
        <end position="215"/>
    </location>
</feature>
<feature type="DNA-binding region" description="H-T-H motif" evidence="1">
    <location>
        <begin position="28"/>
        <end position="48"/>
    </location>
</feature>
<feature type="active site" description="For autocatalytic cleavage activity" evidence="1">
    <location>
        <position position="133"/>
    </location>
</feature>
<feature type="active site" description="For autocatalytic cleavage activity" evidence="1">
    <location>
        <position position="170"/>
    </location>
</feature>
<feature type="site" description="Cleavage; by autolysis" evidence="1">
    <location>
        <begin position="98"/>
        <end position="99"/>
    </location>
</feature>
<organism>
    <name type="scientific">Burkholderia ambifaria (strain MC40-6)</name>
    <dbReference type="NCBI Taxonomy" id="398577"/>
    <lineage>
        <taxon>Bacteria</taxon>
        <taxon>Pseudomonadati</taxon>
        <taxon>Pseudomonadota</taxon>
        <taxon>Betaproteobacteria</taxon>
        <taxon>Burkholderiales</taxon>
        <taxon>Burkholderiaceae</taxon>
        <taxon>Burkholderia</taxon>
        <taxon>Burkholderia cepacia complex</taxon>
    </lineage>
</organism>
<protein>
    <recommendedName>
        <fullName evidence="1">LexA repressor</fullName>
        <ecNumber evidence="1">3.4.21.88</ecNumber>
    </recommendedName>
</protein>